<dbReference type="EMBL" id="U03123">
    <property type="protein sequence ID" value="AAA03566.1"/>
    <property type="molecule type" value="mRNA"/>
</dbReference>
<dbReference type="RefSeq" id="NP_001191428.1">
    <property type="nucleotide sequence ID" value="NM_001204499.1"/>
</dbReference>
<dbReference type="SMR" id="Q16932"/>
<dbReference type="GeneID" id="100533375"/>
<dbReference type="OrthoDB" id="10255013at2759"/>
<dbReference type="Proteomes" id="UP000694888">
    <property type="component" value="Unplaced"/>
</dbReference>
<dbReference type="GO" id="GO:0012505">
    <property type="term" value="C:endomembrane system"/>
    <property type="evidence" value="ECO:0007669"/>
    <property type="project" value="TreeGrafter"/>
</dbReference>
<dbReference type="GO" id="GO:0005886">
    <property type="term" value="C:plasma membrane"/>
    <property type="evidence" value="ECO:0007669"/>
    <property type="project" value="TreeGrafter"/>
</dbReference>
<dbReference type="GO" id="GO:0031201">
    <property type="term" value="C:SNARE complex"/>
    <property type="evidence" value="ECO:0007669"/>
    <property type="project" value="TreeGrafter"/>
</dbReference>
<dbReference type="GO" id="GO:0005484">
    <property type="term" value="F:SNAP receptor activity"/>
    <property type="evidence" value="ECO:0007669"/>
    <property type="project" value="InterPro"/>
</dbReference>
<dbReference type="GO" id="GO:0000149">
    <property type="term" value="F:SNARE binding"/>
    <property type="evidence" value="ECO:0007669"/>
    <property type="project" value="TreeGrafter"/>
</dbReference>
<dbReference type="GO" id="GO:0006887">
    <property type="term" value="P:exocytosis"/>
    <property type="evidence" value="ECO:0007669"/>
    <property type="project" value="TreeGrafter"/>
</dbReference>
<dbReference type="GO" id="GO:0006886">
    <property type="term" value="P:intracellular protein transport"/>
    <property type="evidence" value="ECO:0007669"/>
    <property type="project" value="InterPro"/>
</dbReference>
<dbReference type="GO" id="GO:0006836">
    <property type="term" value="P:neurotransmitter transport"/>
    <property type="evidence" value="ECO:0007669"/>
    <property type="project" value="UniProtKB-KW"/>
</dbReference>
<dbReference type="GO" id="GO:0048278">
    <property type="term" value="P:vesicle docking"/>
    <property type="evidence" value="ECO:0007669"/>
    <property type="project" value="TreeGrafter"/>
</dbReference>
<dbReference type="GO" id="GO:0006906">
    <property type="term" value="P:vesicle fusion"/>
    <property type="evidence" value="ECO:0007669"/>
    <property type="project" value="TreeGrafter"/>
</dbReference>
<dbReference type="CDD" id="cd15880">
    <property type="entry name" value="SNARE_syntaxin1"/>
    <property type="match status" value="1"/>
</dbReference>
<dbReference type="CDD" id="cd00179">
    <property type="entry name" value="SynN"/>
    <property type="match status" value="1"/>
</dbReference>
<dbReference type="FunFam" id="1.20.5.110:FF:000005">
    <property type="entry name" value="Syntaxin 1B"/>
    <property type="match status" value="1"/>
</dbReference>
<dbReference type="FunFam" id="1.20.58.70:FF:000001">
    <property type="entry name" value="Syntaxin 3"/>
    <property type="match status" value="1"/>
</dbReference>
<dbReference type="Gene3D" id="1.20.5.110">
    <property type="match status" value="1"/>
</dbReference>
<dbReference type="Gene3D" id="1.20.58.70">
    <property type="match status" value="1"/>
</dbReference>
<dbReference type="InterPro" id="IPR010989">
    <property type="entry name" value="SNARE"/>
</dbReference>
<dbReference type="InterPro" id="IPR045242">
    <property type="entry name" value="Syntaxin"/>
</dbReference>
<dbReference type="InterPro" id="IPR006012">
    <property type="entry name" value="Syntaxin/epimorphin_CS"/>
</dbReference>
<dbReference type="InterPro" id="IPR006011">
    <property type="entry name" value="Syntaxin_N"/>
</dbReference>
<dbReference type="InterPro" id="IPR000727">
    <property type="entry name" value="T_SNARE_dom"/>
</dbReference>
<dbReference type="PANTHER" id="PTHR19957">
    <property type="entry name" value="SYNTAXIN"/>
    <property type="match status" value="1"/>
</dbReference>
<dbReference type="PANTHER" id="PTHR19957:SF424">
    <property type="entry name" value="SYNTAXIN-1A"/>
    <property type="match status" value="1"/>
</dbReference>
<dbReference type="Pfam" id="PF05739">
    <property type="entry name" value="SNARE"/>
    <property type="match status" value="1"/>
</dbReference>
<dbReference type="Pfam" id="PF00804">
    <property type="entry name" value="Syntaxin"/>
    <property type="match status" value="1"/>
</dbReference>
<dbReference type="SMART" id="SM00503">
    <property type="entry name" value="SynN"/>
    <property type="match status" value="1"/>
</dbReference>
<dbReference type="SMART" id="SM00397">
    <property type="entry name" value="t_SNARE"/>
    <property type="match status" value="1"/>
</dbReference>
<dbReference type="SUPFAM" id="SSF47661">
    <property type="entry name" value="t-snare proteins"/>
    <property type="match status" value="1"/>
</dbReference>
<dbReference type="PROSITE" id="PS00914">
    <property type="entry name" value="SYNTAXIN"/>
    <property type="match status" value="1"/>
</dbReference>
<dbReference type="PROSITE" id="PS50192">
    <property type="entry name" value="T_SNARE"/>
    <property type="match status" value="1"/>
</dbReference>
<proteinExistence type="evidence at transcript level"/>
<organism>
    <name type="scientific">Aplysia californica</name>
    <name type="common">California sea hare</name>
    <dbReference type="NCBI Taxonomy" id="6500"/>
    <lineage>
        <taxon>Eukaryota</taxon>
        <taxon>Metazoa</taxon>
        <taxon>Spiralia</taxon>
        <taxon>Lophotrochozoa</taxon>
        <taxon>Mollusca</taxon>
        <taxon>Gastropoda</taxon>
        <taxon>Heterobranchia</taxon>
        <taxon>Euthyneura</taxon>
        <taxon>Tectipleura</taxon>
        <taxon>Aplysiida</taxon>
        <taxon>Aplysioidea</taxon>
        <taxon>Aplysiidae</taxon>
        <taxon>Aplysia</taxon>
    </lineage>
</organism>
<evidence type="ECO:0000250" key="1"/>
<evidence type="ECO:0000255" key="2"/>
<evidence type="ECO:0000255" key="3">
    <source>
        <dbReference type="PROSITE-ProRule" id="PRU00202"/>
    </source>
</evidence>
<evidence type="ECO:0000256" key="4">
    <source>
        <dbReference type="SAM" id="MobiDB-lite"/>
    </source>
</evidence>
<evidence type="ECO:0000305" key="5"/>
<sequence>MTKDRLAALKAAQSDDDDNDDVAVTVDSSGFMEEFFEQVDEIREMIDKIASNVDEVKKKHSAILSAPQTDDKMKEELEELMSEIKKNANKVRAKLKVIEQNIEQEEHTNKSSADLRIRKTQHATLSRKFVEVMNDYNACQIDYRERCKGRIKRQLAITGKTTTNEELEDMIESGNPAIFTQGIIMETQQANETLADIEARHNDIMKLETSIRDLHDMFMDMAMLVESQGEMIDRIEYNVEQAVDYIETAKMDTKKAVKYQSKARRKKIMILVCLAILIIILVGVIGGTLG</sequence>
<feature type="chain" id="PRO_0000210238" description="Syntaxin">
    <location>
        <begin position="1"/>
        <end position="290"/>
    </location>
</feature>
<feature type="topological domain" description="Cytoplasmic" evidence="2">
    <location>
        <begin position="1"/>
        <end position="267"/>
    </location>
</feature>
<feature type="transmembrane region" description="Helical; Anchor for type IV membrane protein" evidence="2">
    <location>
        <begin position="268"/>
        <end position="288"/>
    </location>
</feature>
<feature type="topological domain" description="Extracellular" evidence="2">
    <location>
        <begin position="289"/>
        <end position="290"/>
    </location>
</feature>
<feature type="domain" description="t-SNARE coiled-coil homology" evidence="3">
    <location>
        <begin position="194"/>
        <end position="256"/>
    </location>
</feature>
<feature type="region of interest" description="Disordered" evidence="4">
    <location>
        <begin position="1"/>
        <end position="22"/>
    </location>
</feature>
<feature type="coiled-coil region" evidence="2">
    <location>
        <begin position="32"/>
        <end position="114"/>
    </location>
</feature>
<reference key="1">
    <citation type="submission" date="1994-03" db="EMBL/GenBank/DDBJ databases">
        <authorList>
            <person name="Hu Y."/>
        </authorList>
    </citation>
    <scope>NUCLEOTIDE SEQUENCE [MRNA]</scope>
    <source>
        <tissue>Ganglion</tissue>
    </source>
</reference>
<name>STX_APLCA</name>
<accession>Q16932</accession>
<comment type="function">
    <text evidence="1">Potentially involved in docking of synaptic vesicles at presynaptic active zones.</text>
</comment>
<comment type="subcellular location">
    <subcellularLocation>
        <location evidence="5">Membrane</location>
        <topology evidence="5">Single-pass type IV membrane protein</topology>
    </subcellularLocation>
</comment>
<comment type="similarity">
    <text evidence="5">Belongs to the syntaxin family.</text>
</comment>
<protein>
    <recommendedName>
        <fullName>Syntaxin</fullName>
    </recommendedName>
</protein>
<keyword id="KW-0175">Coiled coil</keyword>
<keyword id="KW-0472">Membrane</keyword>
<keyword id="KW-0532">Neurotransmitter transport</keyword>
<keyword id="KW-0812">Transmembrane</keyword>
<keyword id="KW-1133">Transmembrane helix</keyword>
<keyword id="KW-0813">Transport</keyword>